<keyword id="KW-0378">Hydrolase</keyword>
<keyword id="KW-0479">Metal-binding</keyword>
<keyword id="KW-0665">Pyrimidine biosynthesis</keyword>
<keyword id="KW-1185">Reference proteome</keyword>
<keyword id="KW-0862">Zinc</keyword>
<reference key="1">
    <citation type="submission" date="2008-05" db="EMBL/GenBank/DDBJ databases">
        <title>Complete sequence of chromosome of Geobacter lovleyi SZ.</title>
        <authorList>
            <consortium name="US DOE Joint Genome Institute"/>
            <person name="Lucas S."/>
            <person name="Copeland A."/>
            <person name="Lapidus A."/>
            <person name="Glavina del Rio T."/>
            <person name="Dalin E."/>
            <person name="Tice H."/>
            <person name="Bruce D."/>
            <person name="Goodwin L."/>
            <person name="Pitluck S."/>
            <person name="Chertkov O."/>
            <person name="Meincke L."/>
            <person name="Brettin T."/>
            <person name="Detter J.C."/>
            <person name="Han C."/>
            <person name="Tapia R."/>
            <person name="Kuske C.R."/>
            <person name="Schmutz J."/>
            <person name="Larimer F."/>
            <person name="Land M."/>
            <person name="Hauser L."/>
            <person name="Kyrpides N."/>
            <person name="Mikhailova N."/>
            <person name="Sung Y."/>
            <person name="Fletcher K.E."/>
            <person name="Ritalahti K.M."/>
            <person name="Loeffler F.E."/>
            <person name="Richardson P."/>
        </authorList>
    </citation>
    <scope>NUCLEOTIDE SEQUENCE [LARGE SCALE GENOMIC DNA]</scope>
    <source>
        <strain>ATCC BAA-1151 / DSM 17278 / SZ</strain>
    </source>
</reference>
<sequence>MNLLIKGGRVIDPSQGIDDTLDVVVENGLVKEIGKGLATSAGAETIDASGKYVVPGLIDMHVHLRDPGLEYKEDIISGTRAAVAGGFTSVCCMPNTKPAIDNKAIASYIINKAKTEGACNVFPVGTITQGMHGDRLAEMGELKESGCVAVSDDGKPVKNSELMRRALQYAAGIGIMVISHAEELELVGEGVMNEGFTSTELGLKGIPRVAEDIATAREIMLAEYVGAPIHIAHVSTKGAVRIIREAKGRGVKVTCETAPHYFTLTDDAVRGYNTNAKMNPPLREADDLAAIKAGLKDGTIDCIATDHAPHHLDEKDVEFNEAMNGIVGLETSLPLSLKLVDEGVLNLSQLIEKMSCKPSELLGLGRGSLKAGNVADITVIDPAKQWTVTESALASKSKNSPWLGATMAGAAACTVVGGKIVFSGR</sequence>
<accession>B3E3I1</accession>
<comment type="function">
    <text evidence="1">Catalyzes the reversible cyclization of carbamoyl aspartate to dihydroorotate.</text>
</comment>
<comment type="catalytic activity">
    <reaction evidence="1">
        <text>(S)-dihydroorotate + H2O = N-carbamoyl-L-aspartate + H(+)</text>
        <dbReference type="Rhea" id="RHEA:24296"/>
        <dbReference type="ChEBI" id="CHEBI:15377"/>
        <dbReference type="ChEBI" id="CHEBI:15378"/>
        <dbReference type="ChEBI" id="CHEBI:30864"/>
        <dbReference type="ChEBI" id="CHEBI:32814"/>
        <dbReference type="EC" id="3.5.2.3"/>
    </reaction>
</comment>
<comment type="cofactor">
    <cofactor evidence="1">
        <name>Zn(2+)</name>
        <dbReference type="ChEBI" id="CHEBI:29105"/>
    </cofactor>
    <text evidence="1">Binds 2 Zn(2+) ions per subunit.</text>
</comment>
<comment type="pathway">
    <text evidence="1">Pyrimidine metabolism; UMP biosynthesis via de novo pathway; (S)-dihydroorotate from bicarbonate: step 3/3.</text>
</comment>
<comment type="similarity">
    <text evidence="1">Belongs to the metallo-dependent hydrolases superfamily. DHOase family. Class I DHOase subfamily.</text>
</comment>
<gene>
    <name evidence="1" type="primary">pyrC</name>
    <name type="ordered locus">Glov_2084</name>
</gene>
<organism>
    <name type="scientific">Trichlorobacter lovleyi (strain ATCC BAA-1151 / DSM 17278 / SZ)</name>
    <name type="common">Geobacter lovleyi</name>
    <dbReference type="NCBI Taxonomy" id="398767"/>
    <lineage>
        <taxon>Bacteria</taxon>
        <taxon>Pseudomonadati</taxon>
        <taxon>Thermodesulfobacteriota</taxon>
        <taxon>Desulfuromonadia</taxon>
        <taxon>Geobacterales</taxon>
        <taxon>Geobacteraceae</taxon>
        <taxon>Trichlorobacter</taxon>
    </lineage>
</organism>
<proteinExistence type="inferred from homology"/>
<name>PYRC_TRIL1</name>
<protein>
    <recommendedName>
        <fullName evidence="1">Dihydroorotase</fullName>
        <shortName evidence="1">DHOase</shortName>
        <ecNumber evidence="1">3.5.2.3</ecNumber>
    </recommendedName>
</protein>
<dbReference type="EC" id="3.5.2.3" evidence="1"/>
<dbReference type="EMBL" id="CP001089">
    <property type="protein sequence ID" value="ACD95800.1"/>
    <property type="molecule type" value="Genomic_DNA"/>
</dbReference>
<dbReference type="RefSeq" id="WP_012470139.1">
    <property type="nucleotide sequence ID" value="NC_010814.1"/>
</dbReference>
<dbReference type="SMR" id="B3E3I1"/>
<dbReference type="STRING" id="398767.Glov_2084"/>
<dbReference type="KEGG" id="glo:Glov_2084"/>
<dbReference type="eggNOG" id="COG0044">
    <property type="taxonomic scope" value="Bacteria"/>
</dbReference>
<dbReference type="HOGENOM" id="CLU_015572_1_0_7"/>
<dbReference type="OrthoDB" id="9803027at2"/>
<dbReference type="UniPathway" id="UPA00070">
    <property type="reaction ID" value="UER00117"/>
</dbReference>
<dbReference type="Proteomes" id="UP000002420">
    <property type="component" value="Chromosome"/>
</dbReference>
<dbReference type="GO" id="GO:0005737">
    <property type="term" value="C:cytoplasm"/>
    <property type="evidence" value="ECO:0007669"/>
    <property type="project" value="TreeGrafter"/>
</dbReference>
<dbReference type="GO" id="GO:0004038">
    <property type="term" value="F:allantoinase activity"/>
    <property type="evidence" value="ECO:0007669"/>
    <property type="project" value="TreeGrafter"/>
</dbReference>
<dbReference type="GO" id="GO:0004151">
    <property type="term" value="F:dihydroorotase activity"/>
    <property type="evidence" value="ECO:0007669"/>
    <property type="project" value="UniProtKB-UniRule"/>
</dbReference>
<dbReference type="GO" id="GO:0008270">
    <property type="term" value="F:zinc ion binding"/>
    <property type="evidence" value="ECO:0007669"/>
    <property type="project" value="UniProtKB-UniRule"/>
</dbReference>
<dbReference type="GO" id="GO:0044205">
    <property type="term" value="P:'de novo' UMP biosynthetic process"/>
    <property type="evidence" value="ECO:0007669"/>
    <property type="project" value="UniProtKB-UniRule"/>
</dbReference>
<dbReference type="GO" id="GO:0006145">
    <property type="term" value="P:purine nucleobase catabolic process"/>
    <property type="evidence" value="ECO:0007669"/>
    <property type="project" value="TreeGrafter"/>
</dbReference>
<dbReference type="CDD" id="cd01317">
    <property type="entry name" value="DHOase_IIa"/>
    <property type="match status" value="1"/>
</dbReference>
<dbReference type="Gene3D" id="3.20.20.140">
    <property type="entry name" value="Metal-dependent hydrolases"/>
    <property type="match status" value="1"/>
</dbReference>
<dbReference type="Gene3D" id="2.30.40.10">
    <property type="entry name" value="Urease, subunit C, domain 1"/>
    <property type="match status" value="1"/>
</dbReference>
<dbReference type="HAMAP" id="MF_00220_B">
    <property type="entry name" value="PyrC_classI_B"/>
    <property type="match status" value="1"/>
</dbReference>
<dbReference type="InterPro" id="IPR006680">
    <property type="entry name" value="Amidohydro-rel"/>
</dbReference>
<dbReference type="InterPro" id="IPR004722">
    <property type="entry name" value="DHOase"/>
</dbReference>
<dbReference type="InterPro" id="IPR050138">
    <property type="entry name" value="DHOase/Allantoinase_Hydrolase"/>
</dbReference>
<dbReference type="InterPro" id="IPR002195">
    <property type="entry name" value="Dihydroorotase_CS"/>
</dbReference>
<dbReference type="InterPro" id="IPR011059">
    <property type="entry name" value="Metal-dep_hydrolase_composite"/>
</dbReference>
<dbReference type="InterPro" id="IPR032466">
    <property type="entry name" value="Metal_Hydrolase"/>
</dbReference>
<dbReference type="NCBIfam" id="TIGR00857">
    <property type="entry name" value="pyrC_multi"/>
    <property type="match status" value="1"/>
</dbReference>
<dbReference type="PANTHER" id="PTHR43668">
    <property type="entry name" value="ALLANTOINASE"/>
    <property type="match status" value="1"/>
</dbReference>
<dbReference type="PANTHER" id="PTHR43668:SF2">
    <property type="entry name" value="ALLANTOINASE"/>
    <property type="match status" value="1"/>
</dbReference>
<dbReference type="Pfam" id="PF01979">
    <property type="entry name" value="Amidohydro_1"/>
    <property type="match status" value="1"/>
</dbReference>
<dbReference type="SUPFAM" id="SSF51338">
    <property type="entry name" value="Composite domain of metallo-dependent hydrolases"/>
    <property type="match status" value="1"/>
</dbReference>
<dbReference type="SUPFAM" id="SSF51556">
    <property type="entry name" value="Metallo-dependent hydrolases"/>
    <property type="match status" value="1"/>
</dbReference>
<dbReference type="PROSITE" id="PS00482">
    <property type="entry name" value="DIHYDROOROTASE_1"/>
    <property type="match status" value="1"/>
</dbReference>
<dbReference type="PROSITE" id="PS00483">
    <property type="entry name" value="DIHYDROOROTASE_2"/>
    <property type="match status" value="1"/>
</dbReference>
<evidence type="ECO:0000255" key="1">
    <source>
        <dbReference type="HAMAP-Rule" id="MF_00220"/>
    </source>
</evidence>
<feature type="chain" id="PRO_1000100076" description="Dihydroorotase">
    <location>
        <begin position="1"/>
        <end position="425"/>
    </location>
</feature>
<feature type="active site" evidence="1">
    <location>
        <position position="306"/>
    </location>
</feature>
<feature type="binding site" evidence="1">
    <location>
        <position position="61"/>
    </location>
    <ligand>
        <name>Zn(2+)</name>
        <dbReference type="ChEBI" id="CHEBI:29105"/>
        <label>1</label>
    </ligand>
</feature>
<feature type="binding site" evidence="1">
    <location>
        <begin position="63"/>
        <end position="65"/>
    </location>
    <ligand>
        <name>substrate</name>
    </ligand>
</feature>
<feature type="binding site" evidence="1">
    <location>
        <position position="63"/>
    </location>
    <ligand>
        <name>Zn(2+)</name>
        <dbReference type="ChEBI" id="CHEBI:29105"/>
        <label>1</label>
    </ligand>
</feature>
<feature type="binding site" evidence="1">
    <location>
        <position position="95"/>
    </location>
    <ligand>
        <name>substrate</name>
    </ligand>
</feature>
<feature type="binding site" evidence="1">
    <location>
        <position position="153"/>
    </location>
    <ligand>
        <name>Zn(2+)</name>
        <dbReference type="ChEBI" id="CHEBI:29105"/>
        <label>1</label>
    </ligand>
</feature>
<feature type="binding site" evidence="1">
    <location>
        <position position="153"/>
    </location>
    <ligand>
        <name>Zn(2+)</name>
        <dbReference type="ChEBI" id="CHEBI:29105"/>
        <label>2</label>
    </ligand>
</feature>
<feature type="binding site" evidence="1">
    <location>
        <position position="180"/>
    </location>
    <ligand>
        <name>Zn(2+)</name>
        <dbReference type="ChEBI" id="CHEBI:29105"/>
        <label>2</label>
    </ligand>
</feature>
<feature type="binding site" evidence="1">
    <location>
        <position position="233"/>
    </location>
    <ligand>
        <name>Zn(2+)</name>
        <dbReference type="ChEBI" id="CHEBI:29105"/>
        <label>2</label>
    </ligand>
</feature>
<feature type="binding site" evidence="1">
    <location>
        <position position="279"/>
    </location>
    <ligand>
        <name>substrate</name>
    </ligand>
</feature>
<feature type="binding site" evidence="1">
    <location>
        <position position="306"/>
    </location>
    <ligand>
        <name>Zn(2+)</name>
        <dbReference type="ChEBI" id="CHEBI:29105"/>
        <label>1</label>
    </ligand>
</feature>
<feature type="binding site" evidence="1">
    <location>
        <position position="310"/>
    </location>
    <ligand>
        <name>substrate</name>
    </ligand>
</feature>